<organism>
    <name type="scientific">Arabidopsis thaliana</name>
    <name type="common">Mouse-ear cress</name>
    <dbReference type="NCBI Taxonomy" id="3702"/>
    <lineage>
        <taxon>Eukaryota</taxon>
        <taxon>Viridiplantae</taxon>
        <taxon>Streptophyta</taxon>
        <taxon>Embryophyta</taxon>
        <taxon>Tracheophyta</taxon>
        <taxon>Spermatophyta</taxon>
        <taxon>Magnoliopsida</taxon>
        <taxon>eudicotyledons</taxon>
        <taxon>Gunneridae</taxon>
        <taxon>Pentapetalae</taxon>
        <taxon>rosids</taxon>
        <taxon>malvids</taxon>
        <taxon>Brassicales</taxon>
        <taxon>Brassicaceae</taxon>
        <taxon>Camelineae</taxon>
        <taxon>Arabidopsis</taxon>
    </lineage>
</organism>
<evidence type="ECO:0000250" key="1"/>
<evidence type="ECO:0000269" key="2">
    <source>
    </source>
</evidence>
<evidence type="ECO:0000305" key="3"/>
<reference key="1">
    <citation type="journal article" date="1999" name="Nature">
        <title>Sequence and analysis of chromosome 4 of the plant Arabidopsis thaliana.</title>
        <authorList>
            <person name="Mayer K.F.X."/>
            <person name="Schueller C."/>
            <person name="Wambutt R."/>
            <person name="Murphy G."/>
            <person name="Volckaert G."/>
            <person name="Pohl T."/>
            <person name="Duesterhoeft A."/>
            <person name="Stiekema W."/>
            <person name="Entian K.-D."/>
            <person name="Terryn N."/>
            <person name="Harris B."/>
            <person name="Ansorge W."/>
            <person name="Brandt P."/>
            <person name="Grivell L.A."/>
            <person name="Rieger M."/>
            <person name="Weichselgartner M."/>
            <person name="de Simone V."/>
            <person name="Obermaier B."/>
            <person name="Mache R."/>
            <person name="Mueller M."/>
            <person name="Kreis M."/>
            <person name="Delseny M."/>
            <person name="Puigdomenech P."/>
            <person name="Watson M."/>
            <person name="Schmidtheini T."/>
            <person name="Reichert B."/>
            <person name="Portetelle D."/>
            <person name="Perez-Alonso M."/>
            <person name="Boutry M."/>
            <person name="Bancroft I."/>
            <person name="Vos P."/>
            <person name="Hoheisel J."/>
            <person name="Zimmermann W."/>
            <person name="Wedler H."/>
            <person name="Ridley P."/>
            <person name="Langham S.-A."/>
            <person name="McCullagh B."/>
            <person name="Bilham L."/>
            <person name="Robben J."/>
            <person name="van der Schueren J."/>
            <person name="Grymonprez B."/>
            <person name="Chuang Y.-J."/>
            <person name="Vandenbussche F."/>
            <person name="Braeken M."/>
            <person name="Weltjens I."/>
            <person name="Voet M."/>
            <person name="Bastiaens I."/>
            <person name="Aert R."/>
            <person name="Defoor E."/>
            <person name="Weitzenegger T."/>
            <person name="Bothe G."/>
            <person name="Ramsperger U."/>
            <person name="Hilbert H."/>
            <person name="Braun M."/>
            <person name="Holzer E."/>
            <person name="Brandt A."/>
            <person name="Peters S."/>
            <person name="van Staveren M."/>
            <person name="Dirkse W."/>
            <person name="Mooijman P."/>
            <person name="Klein Lankhorst R."/>
            <person name="Rose M."/>
            <person name="Hauf J."/>
            <person name="Koetter P."/>
            <person name="Berneiser S."/>
            <person name="Hempel S."/>
            <person name="Feldpausch M."/>
            <person name="Lamberth S."/>
            <person name="Van den Daele H."/>
            <person name="De Keyser A."/>
            <person name="Buysshaert C."/>
            <person name="Gielen J."/>
            <person name="Villarroel R."/>
            <person name="De Clercq R."/>
            <person name="van Montagu M."/>
            <person name="Rogers J."/>
            <person name="Cronin A."/>
            <person name="Quail M.A."/>
            <person name="Bray-Allen S."/>
            <person name="Clark L."/>
            <person name="Doggett J."/>
            <person name="Hall S."/>
            <person name="Kay M."/>
            <person name="Lennard N."/>
            <person name="McLay K."/>
            <person name="Mayes R."/>
            <person name="Pettett A."/>
            <person name="Rajandream M.A."/>
            <person name="Lyne M."/>
            <person name="Benes V."/>
            <person name="Rechmann S."/>
            <person name="Borkova D."/>
            <person name="Bloecker H."/>
            <person name="Scharfe M."/>
            <person name="Grimm M."/>
            <person name="Loehnert T.-H."/>
            <person name="Dose S."/>
            <person name="de Haan M."/>
            <person name="Maarse A.C."/>
            <person name="Schaefer M."/>
            <person name="Mueller-Auer S."/>
            <person name="Gabel C."/>
            <person name="Fuchs M."/>
            <person name="Fartmann B."/>
            <person name="Granderath K."/>
            <person name="Dauner D."/>
            <person name="Herzl A."/>
            <person name="Neumann S."/>
            <person name="Argiriou A."/>
            <person name="Vitale D."/>
            <person name="Liguori R."/>
            <person name="Piravandi E."/>
            <person name="Massenet O."/>
            <person name="Quigley F."/>
            <person name="Clabauld G."/>
            <person name="Muendlein A."/>
            <person name="Felber R."/>
            <person name="Schnabl S."/>
            <person name="Hiller R."/>
            <person name="Schmidt W."/>
            <person name="Lecharny A."/>
            <person name="Aubourg S."/>
            <person name="Chefdor F."/>
            <person name="Cooke R."/>
            <person name="Berger C."/>
            <person name="Monfort A."/>
            <person name="Casacuberta E."/>
            <person name="Gibbons T."/>
            <person name="Weber N."/>
            <person name="Vandenbol M."/>
            <person name="Bargues M."/>
            <person name="Terol J."/>
            <person name="Torres A."/>
            <person name="Perez-Perez A."/>
            <person name="Purnelle B."/>
            <person name="Bent E."/>
            <person name="Johnson S."/>
            <person name="Tacon D."/>
            <person name="Jesse T."/>
            <person name="Heijnen L."/>
            <person name="Schwarz S."/>
            <person name="Scholler P."/>
            <person name="Heber S."/>
            <person name="Francs P."/>
            <person name="Bielke C."/>
            <person name="Frishman D."/>
            <person name="Haase D."/>
            <person name="Lemcke K."/>
            <person name="Mewes H.-W."/>
            <person name="Stocker S."/>
            <person name="Zaccaria P."/>
            <person name="Bevan M."/>
            <person name="Wilson R.K."/>
            <person name="de la Bastide M."/>
            <person name="Habermann K."/>
            <person name="Parnell L."/>
            <person name="Dedhia N."/>
            <person name="Gnoj L."/>
            <person name="Schutz K."/>
            <person name="Huang E."/>
            <person name="Spiegel L."/>
            <person name="Sekhon M."/>
            <person name="Murray J."/>
            <person name="Sheet P."/>
            <person name="Cordes M."/>
            <person name="Abu-Threideh J."/>
            <person name="Stoneking T."/>
            <person name="Kalicki J."/>
            <person name="Graves T."/>
            <person name="Harmon G."/>
            <person name="Edwards J."/>
            <person name="Latreille P."/>
            <person name="Courtney L."/>
            <person name="Cloud J."/>
            <person name="Abbott A."/>
            <person name="Scott K."/>
            <person name="Johnson D."/>
            <person name="Minx P."/>
            <person name="Bentley D."/>
            <person name="Fulton B."/>
            <person name="Miller N."/>
            <person name="Greco T."/>
            <person name="Kemp K."/>
            <person name="Kramer J."/>
            <person name="Fulton L."/>
            <person name="Mardis E."/>
            <person name="Dante M."/>
            <person name="Pepin K."/>
            <person name="Hillier L.W."/>
            <person name="Nelson J."/>
            <person name="Spieth J."/>
            <person name="Ryan E."/>
            <person name="Andrews S."/>
            <person name="Geisel C."/>
            <person name="Layman D."/>
            <person name="Du H."/>
            <person name="Ali J."/>
            <person name="Berghoff A."/>
            <person name="Jones K."/>
            <person name="Drone K."/>
            <person name="Cotton M."/>
            <person name="Joshu C."/>
            <person name="Antonoiu B."/>
            <person name="Zidanic M."/>
            <person name="Strong C."/>
            <person name="Sun H."/>
            <person name="Lamar B."/>
            <person name="Yordan C."/>
            <person name="Ma P."/>
            <person name="Zhong J."/>
            <person name="Preston R."/>
            <person name="Vil D."/>
            <person name="Shekher M."/>
            <person name="Matero A."/>
            <person name="Shah R."/>
            <person name="Swaby I.K."/>
            <person name="O'Shaughnessy A."/>
            <person name="Rodriguez M."/>
            <person name="Hoffman J."/>
            <person name="Till S."/>
            <person name="Granat S."/>
            <person name="Shohdy N."/>
            <person name="Hasegawa A."/>
            <person name="Hameed A."/>
            <person name="Lodhi M."/>
            <person name="Johnson A."/>
            <person name="Chen E."/>
            <person name="Marra M.A."/>
            <person name="Martienssen R."/>
            <person name="McCombie W.R."/>
        </authorList>
    </citation>
    <scope>NUCLEOTIDE SEQUENCE [LARGE SCALE GENOMIC DNA]</scope>
    <source>
        <strain>cv. Columbia</strain>
    </source>
</reference>
<reference key="2">
    <citation type="journal article" date="2017" name="Plant J.">
        <title>Araport11: a complete reannotation of the Arabidopsis thaliana reference genome.</title>
        <authorList>
            <person name="Cheng C.Y."/>
            <person name="Krishnakumar V."/>
            <person name="Chan A.P."/>
            <person name="Thibaud-Nissen F."/>
            <person name="Schobel S."/>
            <person name="Town C.D."/>
        </authorList>
    </citation>
    <scope>GENOME REANNOTATION</scope>
    <source>
        <strain>cv. Columbia</strain>
    </source>
</reference>
<reference key="3">
    <citation type="journal article" date="2003" name="Science">
        <title>Empirical analysis of transcriptional activity in the Arabidopsis genome.</title>
        <authorList>
            <person name="Yamada K."/>
            <person name="Lim J."/>
            <person name="Dale J.M."/>
            <person name="Chen H."/>
            <person name="Shinn P."/>
            <person name="Palm C.J."/>
            <person name="Southwick A.M."/>
            <person name="Wu H.C."/>
            <person name="Kim C.J."/>
            <person name="Nguyen M."/>
            <person name="Pham P.K."/>
            <person name="Cheuk R.F."/>
            <person name="Karlin-Newmann G."/>
            <person name="Liu S.X."/>
            <person name="Lam B."/>
            <person name="Sakano H."/>
            <person name="Wu T."/>
            <person name="Yu G."/>
            <person name="Miranda M."/>
            <person name="Quach H.L."/>
            <person name="Tripp M."/>
            <person name="Chang C.H."/>
            <person name="Lee J.M."/>
            <person name="Toriumi M.J."/>
            <person name="Chan M.M."/>
            <person name="Tang C.C."/>
            <person name="Onodera C.S."/>
            <person name="Deng J.M."/>
            <person name="Akiyama K."/>
            <person name="Ansari Y."/>
            <person name="Arakawa T."/>
            <person name="Banh J."/>
            <person name="Banno F."/>
            <person name="Bowser L."/>
            <person name="Brooks S.Y."/>
            <person name="Carninci P."/>
            <person name="Chao Q."/>
            <person name="Choy N."/>
            <person name="Enju A."/>
            <person name="Goldsmith A.D."/>
            <person name="Gurjal M."/>
            <person name="Hansen N.F."/>
            <person name="Hayashizaki Y."/>
            <person name="Johnson-Hopson C."/>
            <person name="Hsuan V.W."/>
            <person name="Iida K."/>
            <person name="Karnes M."/>
            <person name="Khan S."/>
            <person name="Koesema E."/>
            <person name="Ishida J."/>
            <person name="Jiang P.X."/>
            <person name="Jones T."/>
            <person name="Kawai J."/>
            <person name="Kamiya A."/>
            <person name="Meyers C."/>
            <person name="Nakajima M."/>
            <person name="Narusaka M."/>
            <person name="Seki M."/>
            <person name="Sakurai T."/>
            <person name="Satou M."/>
            <person name="Tamse R."/>
            <person name="Vaysberg M."/>
            <person name="Wallender E.K."/>
            <person name="Wong C."/>
            <person name="Yamamura Y."/>
            <person name="Yuan S."/>
            <person name="Shinozaki K."/>
            <person name="Davis R.W."/>
            <person name="Theologis A."/>
            <person name="Ecker J.R."/>
        </authorList>
    </citation>
    <scope>NUCLEOTIDE SEQUENCE [LARGE SCALE MRNA]</scope>
    <source>
        <strain>cv. Columbia</strain>
    </source>
</reference>
<reference key="4">
    <citation type="journal article" date="2006" name="Plant Cell">
        <title>Plant retromer, localized to the prevacuolar compartment and microvesicles in Arabidopsis, may interact with vacuolar sorting receptors.</title>
        <authorList>
            <person name="Oliviusson P."/>
            <person name="Heinzerling O."/>
            <person name="Hillmer S."/>
            <person name="Hinz G."/>
            <person name="Tse Y.C."/>
            <person name="Jiang L."/>
            <person name="Robinson D.G."/>
        </authorList>
    </citation>
    <scope>COMPONENT OF THE RETROMER COMPLEX</scope>
    <scope>SUBCELLULAR LOCATION</scope>
</reference>
<sequence length="303" mass="35204">MNYLLGAFKPACNISITFSDGKNRKQVPMKKENGQTALVPLFHSQDTISGKVCIEPYQGKKVEHNGVKVELLGQIEMYFDRGNFYDFTSLVRELDVPGEIYERKTYPFEFPTVEMPYETYNGVNVRLRYVLKVTVTRGYAGSILEYQELVVRNYAPLPDINNSIKMEVGIEDCLHIEFEYNKSKYHLKDVILGKIYFLLVRIKMKNMDLEIRRRESTGAGANTHVETETLAKFELMDGTPVRGESIPVRLFLAPYDLTPTHRNINNKFSVKYYLNLVLVDEEDRRYFKQQEITLYRLKEDASS</sequence>
<accession>Q9T091</accession>
<accession>Q8L3V2</accession>
<comment type="function">
    <text>Plays a role in vesicular protein sorting. Component of the membrane-associated retromer complex which is essential in endosome-to-Golgi retrograde transport. The VPS29-VPS26-VPS35 subcomplex may be involved in recycling of specific cargos from endosome to the plasma membrane.</text>
</comment>
<comment type="subunit">
    <text>Component of the retromer complex which consists of VPS29 (MAG1), VPS26 (VPS26A or VPS26B), VPS35 (VPS35A or VPS35B or VPS35C), VPS5/17 (SNX1 or SNX2A or SNX2B). Component of a retromer subcomplex consisting of VPS29 (MAG1), VPS26 (VPS26A or VPS26B), VPS35 (VPS35A or VPS35B or VPS35C).</text>
</comment>
<comment type="subcellular location">
    <subcellularLocation>
        <location evidence="2">Cytoplasm</location>
    </subcellularLocation>
    <subcellularLocation>
        <location evidence="2">Endosome membrane</location>
        <topology evidence="2">Peripheral membrane protein</topology>
        <orientation evidence="2">Cytoplasmic side</orientation>
    </subcellularLocation>
    <subcellularLocation>
        <location evidence="2">Prevacuolar compartment membrane</location>
        <topology evidence="2">Peripheral membrane protein</topology>
        <orientation evidence="2">Cytoplasmic side</orientation>
    </subcellularLocation>
    <subcellularLocation>
        <location evidence="1">Golgi apparatus</location>
        <location evidence="1">trans-Golgi network membrane</location>
        <topology evidence="1">Peripheral membrane protein</topology>
        <orientation evidence="1">Cytoplasmic side</orientation>
    </subcellularLocation>
</comment>
<comment type="alternative products">
    <event type="alternative splicing"/>
    <isoform>
        <id>Q9T091-1</id>
        <name>1</name>
        <sequence type="displayed"/>
    </isoform>
    <text>A number of isoforms are produced. According to EST sequences.</text>
</comment>
<comment type="similarity">
    <text evidence="3">Belongs to the VPS26 family.</text>
</comment>
<comment type="sequence caution" evidence="3">
    <conflict type="erroneous gene model prediction">
        <sequence resource="EMBL-CDS" id="CAB38281"/>
    </conflict>
</comment>
<comment type="sequence caution" evidence="3">
    <conflict type="erroneous gene model prediction">
        <sequence resource="EMBL-CDS" id="CAB81419"/>
    </conflict>
</comment>
<keyword id="KW-0025">Alternative splicing</keyword>
<keyword id="KW-0963">Cytoplasm</keyword>
<keyword id="KW-0967">Endosome</keyword>
<keyword id="KW-0333">Golgi apparatus</keyword>
<keyword id="KW-0472">Membrane</keyword>
<keyword id="KW-0653">Protein transport</keyword>
<keyword id="KW-1185">Reference proteome</keyword>
<keyword id="KW-0813">Transport</keyword>
<dbReference type="EMBL" id="AL035602">
    <property type="protein sequence ID" value="CAB38281.1"/>
    <property type="status" value="ALT_SEQ"/>
    <property type="molecule type" value="Genomic_DNA"/>
</dbReference>
<dbReference type="EMBL" id="AL161571">
    <property type="protein sequence ID" value="CAB81419.1"/>
    <property type="status" value="ALT_SEQ"/>
    <property type="molecule type" value="Genomic_DNA"/>
</dbReference>
<dbReference type="EMBL" id="CP002687">
    <property type="protein sequence ID" value="AEE85381.1"/>
    <property type="molecule type" value="Genomic_DNA"/>
</dbReference>
<dbReference type="EMBL" id="AY094409">
    <property type="protein sequence ID" value="AAM19785.1"/>
    <property type="molecule type" value="mRNA"/>
</dbReference>
<dbReference type="EMBL" id="AY122891">
    <property type="protein sequence ID" value="AAM67424.1"/>
    <property type="molecule type" value="mRNA"/>
</dbReference>
<dbReference type="PIR" id="A85322">
    <property type="entry name" value="A85322"/>
</dbReference>
<dbReference type="PIR" id="T05874">
    <property type="entry name" value="T05874"/>
</dbReference>
<dbReference type="RefSeq" id="NP_194499.2">
    <molecule id="Q9T091-1"/>
    <property type="nucleotide sequence ID" value="NM_118908.5"/>
</dbReference>
<dbReference type="SMR" id="Q9T091"/>
<dbReference type="BioGRID" id="14170">
    <property type="interactions" value="6"/>
</dbReference>
<dbReference type="FunCoup" id="Q9T091">
    <property type="interactions" value="4835"/>
</dbReference>
<dbReference type="IntAct" id="Q9T091">
    <property type="interactions" value="1"/>
</dbReference>
<dbReference type="STRING" id="3702.Q9T091"/>
<dbReference type="PaxDb" id="3702-AT4G27690.1"/>
<dbReference type="ProteomicsDB" id="242731">
    <molecule id="Q9T091-1"/>
</dbReference>
<dbReference type="DNASU" id="828883"/>
<dbReference type="EnsemblPlants" id="AT4G27690.1">
    <molecule id="Q9T091-1"/>
    <property type="protein sequence ID" value="AT4G27690.1"/>
    <property type="gene ID" value="AT4G27690"/>
</dbReference>
<dbReference type="GeneID" id="828883"/>
<dbReference type="Gramene" id="AT4G27690.1">
    <molecule id="Q9T091-1"/>
    <property type="protein sequence ID" value="AT4G27690.1"/>
    <property type="gene ID" value="AT4G27690"/>
</dbReference>
<dbReference type="KEGG" id="ath:AT4G27690"/>
<dbReference type="Araport" id="AT4G27690"/>
<dbReference type="TAIR" id="AT4G27690">
    <property type="gene designation" value="VPS26B"/>
</dbReference>
<dbReference type="eggNOG" id="KOG3063">
    <property type="taxonomic scope" value="Eukaryota"/>
</dbReference>
<dbReference type="HOGENOM" id="CLU_031077_3_1_1"/>
<dbReference type="InParanoid" id="Q9T091"/>
<dbReference type="OMA" id="CEIEVAL"/>
<dbReference type="PhylomeDB" id="Q9T091"/>
<dbReference type="PRO" id="PR:Q9T091"/>
<dbReference type="Proteomes" id="UP000006548">
    <property type="component" value="Chromosome 4"/>
</dbReference>
<dbReference type="ExpressionAtlas" id="Q9T091">
    <property type="expression patterns" value="baseline and differential"/>
</dbReference>
<dbReference type="GO" id="GO:0010008">
    <property type="term" value="C:endosome membrane"/>
    <property type="evidence" value="ECO:0007669"/>
    <property type="project" value="UniProtKB-SubCell"/>
</dbReference>
<dbReference type="GO" id="GO:0005794">
    <property type="term" value="C:Golgi apparatus"/>
    <property type="evidence" value="ECO:0007669"/>
    <property type="project" value="UniProtKB-SubCell"/>
</dbReference>
<dbReference type="GO" id="GO:0006886">
    <property type="term" value="P:intracellular protein transport"/>
    <property type="evidence" value="ECO:0007669"/>
    <property type="project" value="InterPro"/>
</dbReference>
<dbReference type="FunFam" id="2.60.40.640:FF:000006">
    <property type="entry name" value="Vacuolar protein sorting-associated protein 26"/>
    <property type="match status" value="1"/>
</dbReference>
<dbReference type="FunFam" id="2.60.40.640:FF:000012">
    <property type="entry name" value="vacuolar protein sorting-associated protein 26A"/>
    <property type="match status" value="1"/>
</dbReference>
<dbReference type="Gene3D" id="2.60.40.640">
    <property type="match status" value="2"/>
</dbReference>
<dbReference type="InterPro" id="IPR014752">
    <property type="entry name" value="Arrestin-like_C"/>
</dbReference>
<dbReference type="InterPro" id="IPR014756">
    <property type="entry name" value="Ig_E-set"/>
</dbReference>
<dbReference type="InterPro" id="IPR028934">
    <property type="entry name" value="Vps26-related"/>
</dbReference>
<dbReference type="PANTHER" id="PTHR12233">
    <property type="entry name" value="VACUOLAR PROTEIN SORTING 26 RELATED"/>
    <property type="match status" value="1"/>
</dbReference>
<dbReference type="Pfam" id="PF03643">
    <property type="entry name" value="Vps26"/>
    <property type="match status" value="1"/>
</dbReference>
<dbReference type="SUPFAM" id="SSF81296">
    <property type="entry name" value="E set domains"/>
    <property type="match status" value="1"/>
</dbReference>
<name>VP26B_ARATH</name>
<proteinExistence type="evidence at transcript level"/>
<feature type="chain" id="PRO_0000073013" description="Vacuolar protein sorting-associated protein 26B">
    <location>
        <begin position="1"/>
        <end position="303"/>
    </location>
</feature>
<gene>
    <name type="primary">VPS26B</name>
    <name type="ordered locus">At4g27690</name>
    <name type="ORF">T29A15.180</name>
</gene>
<protein>
    <recommendedName>
        <fullName>Vacuolar protein sorting-associated protein 26B</fullName>
    </recommendedName>
    <alternativeName>
        <fullName>Vesicle protein sorting 26B</fullName>
    </alternativeName>
</protein>